<organism>
    <name type="scientific">Mus musculus</name>
    <name type="common">Mouse</name>
    <dbReference type="NCBI Taxonomy" id="10090"/>
    <lineage>
        <taxon>Eukaryota</taxon>
        <taxon>Metazoa</taxon>
        <taxon>Chordata</taxon>
        <taxon>Craniata</taxon>
        <taxon>Vertebrata</taxon>
        <taxon>Euteleostomi</taxon>
        <taxon>Mammalia</taxon>
        <taxon>Eutheria</taxon>
        <taxon>Euarchontoglires</taxon>
        <taxon>Glires</taxon>
        <taxon>Rodentia</taxon>
        <taxon>Myomorpha</taxon>
        <taxon>Muroidea</taxon>
        <taxon>Muridae</taxon>
        <taxon>Murinae</taxon>
        <taxon>Mus</taxon>
        <taxon>Mus</taxon>
    </lineage>
</organism>
<evidence type="ECO:0000250" key="1">
    <source>
        <dbReference type="UniProtKB" id="O43781"/>
    </source>
</evidence>
<evidence type="ECO:0000250" key="2">
    <source>
        <dbReference type="UniProtKB" id="P28523"/>
    </source>
</evidence>
<evidence type="ECO:0000255" key="3">
    <source>
        <dbReference type="PROSITE-ProRule" id="PRU00159"/>
    </source>
</evidence>
<evidence type="ECO:0000255" key="4">
    <source>
        <dbReference type="PROSITE-ProRule" id="PRU10027"/>
    </source>
</evidence>
<evidence type="ECO:0000256" key="5">
    <source>
        <dbReference type="SAM" id="MobiDB-lite"/>
    </source>
</evidence>
<evidence type="ECO:0000269" key="6">
    <source>
    </source>
</evidence>
<evidence type="ECO:0000269" key="7">
    <source>
    </source>
</evidence>
<evidence type="ECO:0000269" key="8">
    <source>
    </source>
</evidence>
<evidence type="ECO:0000305" key="9"/>
<evidence type="ECO:0000312" key="10">
    <source>
        <dbReference type="EMBL" id="AAH06704.1"/>
    </source>
</evidence>
<evidence type="ECO:0000312" key="11">
    <source>
        <dbReference type="EMBL" id="BAC28949.1"/>
    </source>
</evidence>
<evidence type="ECO:0000312" key="12">
    <source>
        <dbReference type="MGI" id="MGI:1330300"/>
    </source>
</evidence>
<protein>
    <recommendedName>
        <fullName>Dual specificity tyrosine-phosphorylation-regulated kinase 3</fullName>
        <ecNumber evidence="6 8">2.7.12.1</ecNumber>
    </recommendedName>
</protein>
<accession>Q922Y0</accession>
<accession>Q8BM34</accession>
<keyword id="KW-0067">ATP-binding</keyword>
<keyword id="KW-0131">Cell cycle</keyword>
<keyword id="KW-0132">Cell division</keyword>
<keyword id="KW-0963">Cytoplasm</keyword>
<keyword id="KW-0206">Cytoskeleton</keyword>
<keyword id="KW-0418">Kinase</keyword>
<keyword id="KW-0460">Magnesium</keyword>
<keyword id="KW-0479">Metal-binding</keyword>
<keyword id="KW-0498">Mitosis</keyword>
<keyword id="KW-0547">Nucleotide-binding</keyword>
<keyword id="KW-0539">Nucleus</keyword>
<keyword id="KW-0597">Phosphoprotein</keyword>
<keyword id="KW-1185">Reference proteome</keyword>
<keyword id="KW-0723">Serine/threonine-protein kinase</keyword>
<keyword id="KW-0808">Transferase</keyword>
<keyword id="KW-0829">Tyrosine-protein kinase</keyword>
<keyword id="KW-0832">Ubl conjugation</keyword>
<proteinExistence type="evidence at protein level"/>
<feature type="chain" id="PRO_0000291537" description="Dual specificity tyrosine-phosphorylation-regulated kinase 3">
    <location>
        <begin position="1"/>
        <end position="586"/>
    </location>
</feature>
<feature type="domain" description="Protein kinase" evidence="3">
    <location>
        <begin position="208"/>
        <end position="521"/>
    </location>
</feature>
<feature type="region of interest" description="Disordered" evidence="1">
    <location>
        <begin position="1"/>
        <end position="187"/>
    </location>
</feature>
<feature type="short sequence motif" description="Nuclear localization signal" evidence="1">
    <location>
        <begin position="467"/>
        <end position="480"/>
    </location>
</feature>
<feature type="compositionally biased region" description="Basic and acidic residues" evidence="5">
    <location>
        <begin position="1"/>
        <end position="13"/>
    </location>
</feature>
<feature type="active site" description="Proton acceptor" evidence="2 3 4">
    <location>
        <position position="334"/>
    </location>
</feature>
<feature type="binding site" evidence="2 3">
    <location>
        <begin position="214"/>
        <end position="222"/>
    </location>
    <ligand>
        <name>ATP</name>
        <dbReference type="ChEBI" id="CHEBI:30616"/>
    </ligand>
</feature>
<feature type="binding site" evidence="3 6">
    <location>
        <position position="237"/>
    </location>
    <ligand>
        <name>ATP</name>
        <dbReference type="ChEBI" id="CHEBI:30616"/>
    </ligand>
</feature>
<feature type="binding site" evidence="3">
    <location>
        <begin position="287"/>
        <end position="290"/>
    </location>
    <ligand>
        <name>ATP</name>
        <dbReference type="ChEBI" id="CHEBI:30616"/>
    </ligand>
</feature>
<feature type="modified residue" description="Phosphotyrosine" evidence="6">
    <location>
        <position position="368"/>
    </location>
</feature>
<feature type="mutagenesis site" description="Loss of kinase activity." evidence="6">
    <original>K</original>
    <variation>A</variation>
    <location>
        <position position="237"/>
    </location>
</feature>
<feature type="mutagenesis site" description="Minimal loss of kinase activity." evidence="6">
    <original>Y</original>
    <variation>A</variation>
    <location>
        <position position="366"/>
    </location>
</feature>
<feature type="mutagenesis site" description="Minimal loss of kinase activity; when associated with E-368." evidence="6">
    <original>Y</original>
    <variation>E</variation>
    <location>
        <position position="366"/>
    </location>
</feature>
<feature type="mutagenesis site" description="Loss of kinase activity." evidence="6">
    <original>Y</original>
    <variation>A</variation>
    <location>
        <position position="368"/>
    </location>
</feature>
<feature type="mutagenesis site" description="Minimal loss of kinase activity; when associated with E-366." evidence="6">
    <original>Y</original>
    <variation>E</variation>
    <location>
        <position position="368"/>
    </location>
</feature>
<dbReference type="EC" id="2.7.12.1" evidence="6 8"/>
<dbReference type="EMBL" id="BC006704">
    <property type="protein sequence ID" value="AAH06704.1"/>
    <property type="molecule type" value="mRNA"/>
</dbReference>
<dbReference type="EMBL" id="AK035114">
    <property type="protein sequence ID" value="BAC28949.1"/>
    <property type="molecule type" value="mRNA"/>
</dbReference>
<dbReference type="CCDS" id="CCDS15267.1"/>
<dbReference type="RefSeq" id="NP_663483.1">
    <property type="nucleotide sequence ID" value="NM_145508.3"/>
</dbReference>
<dbReference type="SMR" id="Q922Y0"/>
<dbReference type="BioGRID" id="230510">
    <property type="interactions" value="4"/>
</dbReference>
<dbReference type="FunCoup" id="Q922Y0">
    <property type="interactions" value="1272"/>
</dbReference>
<dbReference type="IntAct" id="Q922Y0">
    <property type="interactions" value="2"/>
</dbReference>
<dbReference type="STRING" id="10090.ENSMUSP00000016670"/>
<dbReference type="GlyGen" id="Q922Y0">
    <property type="glycosylation" value="1 site, 1 O-linked glycan (1 site)"/>
</dbReference>
<dbReference type="iPTMnet" id="Q922Y0"/>
<dbReference type="PhosphoSitePlus" id="Q922Y0"/>
<dbReference type="PaxDb" id="10090-ENSMUSP00000016670"/>
<dbReference type="ProteomicsDB" id="277620"/>
<dbReference type="Antibodypedia" id="34587">
    <property type="antibodies" value="230 antibodies from 29 providers"/>
</dbReference>
<dbReference type="DNASU" id="226419"/>
<dbReference type="Ensembl" id="ENSMUST00000016670.9">
    <property type="protein sequence ID" value="ENSMUSP00000016670.8"/>
    <property type="gene ID" value="ENSMUSG00000016526.9"/>
</dbReference>
<dbReference type="GeneID" id="226419"/>
<dbReference type="KEGG" id="mmu:226419"/>
<dbReference type="UCSC" id="uc007cmw.1">
    <property type="organism name" value="mouse"/>
</dbReference>
<dbReference type="AGR" id="MGI:1330300"/>
<dbReference type="CTD" id="8444"/>
<dbReference type="MGI" id="MGI:1330300">
    <property type="gene designation" value="Dyrk3"/>
</dbReference>
<dbReference type="VEuPathDB" id="HostDB:ENSMUSG00000016526"/>
<dbReference type="eggNOG" id="KOG0667">
    <property type="taxonomic scope" value="Eukaryota"/>
</dbReference>
<dbReference type="GeneTree" id="ENSGT00940000159878"/>
<dbReference type="HOGENOM" id="CLU_000288_5_13_1"/>
<dbReference type="InParanoid" id="Q922Y0"/>
<dbReference type="OMA" id="HPWISKC"/>
<dbReference type="OrthoDB" id="9332038at2759"/>
<dbReference type="PhylomeDB" id="Q922Y0"/>
<dbReference type="TreeFam" id="TF314624"/>
<dbReference type="BRENDA" id="2.7.12.1">
    <property type="organism ID" value="3474"/>
</dbReference>
<dbReference type="BioGRID-ORCS" id="226419">
    <property type="hits" value="0 hits in 80 CRISPR screens"/>
</dbReference>
<dbReference type="PRO" id="PR:Q922Y0"/>
<dbReference type="Proteomes" id="UP000000589">
    <property type="component" value="Chromosome 1"/>
</dbReference>
<dbReference type="RNAct" id="Q922Y0">
    <property type="molecule type" value="protein"/>
</dbReference>
<dbReference type="Bgee" id="ENSMUSG00000016526">
    <property type="expression patterns" value="Expressed in seminiferous tubule of testis and 173 other cell types or tissues"/>
</dbReference>
<dbReference type="ExpressionAtlas" id="Q922Y0">
    <property type="expression patterns" value="baseline and differential"/>
</dbReference>
<dbReference type="GO" id="GO:0005737">
    <property type="term" value="C:cytoplasm"/>
    <property type="evidence" value="ECO:0000250"/>
    <property type="project" value="UniProtKB"/>
</dbReference>
<dbReference type="GO" id="GO:0010494">
    <property type="term" value="C:cytoplasmic stress granule"/>
    <property type="evidence" value="ECO:0000250"/>
    <property type="project" value="UniProtKB"/>
</dbReference>
<dbReference type="GO" id="GO:0005829">
    <property type="term" value="C:cytosol"/>
    <property type="evidence" value="ECO:0007669"/>
    <property type="project" value="Ensembl"/>
</dbReference>
<dbReference type="GO" id="GO:0016607">
    <property type="term" value="C:nuclear speck"/>
    <property type="evidence" value="ECO:0000250"/>
    <property type="project" value="UniProtKB"/>
</dbReference>
<dbReference type="GO" id="GO:0005634">
    <property type="term" value="C:nucleus"/>
    <property type="evidence" value="ECO:0000250"/>
    <property type="project" value="UniProtKB"/>
</dbReference>
<dbReference type="GO" id="GO:0000242">
    <property type="term" value="C:pericentriolar material"/>
    <property type="evidence" value="ECO:0000250"/>
    <property type="project" value="UniProtKB"/>
</dbReference>
<dbReference type="GO" id="GO:0005524">
    <property type="term" value="F:ATP binding"/>
    <property type="evidence" value="ECO:0000314"/>
    <property type="project" value="UniProtKB"/>
</dbReference>
<dbReference type="GO" id="GO:0000287">
    <property type="term" value="F:magnesium ion binding"/>
    <property type="evidence" value="ECO:0000314"/>
    <property type="project" value="UniProtKB"/>
</dbReference>
<dbReference type="GO" id="GO:0004672">
    <property type="term" value="F:protein kinase activity"/>
    <property type="evidence" value="ECO:0000314"/>
    <property type="project" value="UniProtKB"/>
</dbReference>
<dbReference type="GO" id="GO:0106310">
    <property type="term" value="F:protein serine kinase activity"/>
    <property type="evidence" value="ECO:0007669"/>
    <property type="project" value="RHEA"/>
</dbReference>
<dbReference type="GO" id="GO:0004674">
    <property type="term" value="F:protein serine/threonine kinase activity"/>
    <property type="evidence" value="ECO:0000315"/>
    <property type="project" value="UniProtKB"/>
</dbReference>
<dbReference type="GO" id="GO:0004712">
    <property type="term" value="F:protein serine/threonine/tyrosine kinase activity"/>
    <property type="evidence" value="ECO:0007669"/>
    <property type="project" value="UniProtKB-EC"/>
</dbReference>
<dbReference type="GO" id="GO:0004713">
    <property type="term" value="F:protein tyrosine kinase activity"/>
    <property type="evidence" value="ECO:0000266"/>
    <property type="project" value="MGI"/>
</dbReference>
<dbReference type="GO" id="GO:0051301">
    <property type="term" value="P:cell division"/>
    <property type="evidence" value="ECO:0007669"/>
    <property type="project" value="UniProtKB-KW"/>
</dbReference>
<dbReference type="GO" id="GO:0030218">
    <property type="term" value="P:erythrocyte differentiation"/>
    <property type="evidence" value="ECO:0000314"/>
    <property type="project" value="UniProtKB"/>
</dbReference>
<dbReference type="GO" id="GO:0043066">
    <property type="term" value="P:negative regulation of apoptotic process"/>
    <property type="evidence" value="ECO:0000315"/>
    <property type="project" value="UniProtKB"/>
</dbReference>
<dbReference type="GO" id="GO:0043518">
    <property type="term" value="P:negative regulation of DNA damage response, signal transduction by p53 class mediator"/>
    <property type="evidence" value="ECO:0000315"/>
    <property type="project" value="UniProtKB"/>
</dbReference>
<dbReference type="GO" id="GO:0035063">
    <property type="term" value="P:nuclear speck organization"/>
    <property type="evidence" value="ECO:0000250"/>
    <property type="project" value="UniProtKB"/>
</dbReference>
<dbReference type="GO" id="GO:1903008">
    <property type="term" value="P:organelle disassembly"/>
    <property type="evidence" value="ECO:0000250"/>
    <property type="project" value="UniProtKB"/>
</dbReference>
<dbReference type="GO" id="GO:1902751">
    <property type="term" value="P:positive regulation of cell cycle G2/M phase transition"/>
    <property type="evidence" value="ECO:0000250"/>
    <property type="project" value="UniProtKB"/>
</dbReference>
<dbReference type="GO" id="GO:0006468">
    <property type="term" value="P:protein phosphorylation"/>
    <property type="evidence" value="ECO:0000314"/>
    <property type="project" value="UniProtKB"/>
</dbReference>
<dbReference type="GO" id="GO:0080135">
    <property type="term" value="P:regulation of cellular response to stress"/>
    <property type="evidence" value="ECO:0000250"/>
    <property type="project" value="UniProtKB"/>
</dbReference>
<dbReference type="GO" id="GO:1903432">
    <property type="term" value="P:regulation of TORC1 signaling"/>
    <property type="evidence" value="ECO:0000250"/>
    <property type="project" value="UniProtKB"/>
</dbReference>
<dbReference type="GO" id="GO:0035617">
    <property type="term" value="P:stress granule disassembly"/>
    <property type="evidence" value="ECO:0000250"/>
    <property type="project" value="UniProtKB"/>
</dbReference>
<dbReference type="CDD" id="cd14224">
    <property type="entry name" value="PKc_DYRK2_3"/>
    <property type="match status" value="1"/>
</dbReference>
<dbReference type="FunFam" id="1.10.510.10:FF:000112">
    <property type="entry name" value="Putative dual specificity tyrosine-phosphorylation-regulated kinase 2"/>
    <property type="match status" value="1"/>
</dbReference>
<dbReference type="FunFam" id="3.30.200.20:FF:000127">
    <property type="entry name" value="Putative dual specificity tyrosine-phosphorylation-regulated kinase 2"/>
    <property type="match status" value="1"/>
</dbReference>
<dbReference type="Gene3D" id="3.30.10.30">
    <property type="entry name" value="DYRK"/>
    <property type="match status" value="1"/>
</dbReference>
<dbReference type="Gene3D" id="3.30.200.20">
    <property type="entry name" value="Phosphorylase Kinase, domain 1"/>
    <property type="match status" value="1"/>
</dbReference>
<dbReference type="Gene3D" id="1.10.510.10">
    <property type="entry name" value="Transferase(Phosphotransferase) domain 1"/>
    <property type="match status" value="1"/>
</dbReference>
<dbReference type="InterPro" id="IPR042521">
    <property type="entry name" value="DYRK"/>
</dbReference>
<dbReference type="InterPro" id="IPR011009">
    <property type="entry name" value="Kinase-like_dom_sf"/>
</dbReference>
<dbReference type="InterPro" id="IPR000719">
    <property type="entry name" value="Prot_kinase_dom"/>
</dbReference>
<dbReference type="InterPro" id="IPR017441">
    <property type="entry name" value="Protein_kinase_ATP_BS"/>
</dbReference>
<dbReference type="InterPro" id="IPR008271">
    <property type="entry name" value="Ser/Thr_kinase_AS"/>
</dbReference>
<dbReference type="InterPro" id="IPR050494">
    <property type="entry name" value="Ser_Thr_dual-spec_kinase"/>
</dbReference>
<dbReference type="PANTHER" id="PTHR24058">
    <property type="entry name" value="DUAL SPECIFICITY PROTEIN KINASE"/>
    <property type="match status" value="1"/>
</dbReference>
<dbReference type="PANTHER" id="PTHR24058:SF35">
    <property type="entry name" value="DUAL SPECIFICITY TYROSINE-PHOSPHORYLATION-REGULATED KINASE 3"/>
    <property type="match status" value="1"/>
</dbReference>
<dbReference type="Pfam" id="PF00069">
    <property type="entry name" value="Pkinase"/>
    <property type="match status" value="1"/>
</dbReference>
<dbReference type="SMART" id="SM00220">
    <property type="entry name" value="S_TKc"/>
    <property type="match status" value="1"/>
</dbReference>
<dbReference type="SUPFAM" id="SSF56112">
    <property type="entry name" value="Protein kinase-like (PK-like)"/>
    <property type="match status" value="1"/>
</dbReference>
<dbReference type="PROSITE" id="PS00107">
    <property type="entry name" value="PROTEIN_KINASE_ATP"/>
    <property type="match status" value="1"/>
</dbReference>
<dbReference type="PROSITE" id="PS50011">
    <property type="entry name" value="PROTEIN_KINASE_DOM"/>
    <property type="match status" value="1"/>
</dbReference>
<dbReference type="PROSITE" id="PS00108">
    <property type="entry name" value="PROTEIN_KINASE_ST"/>
    <property type="match status" value="1"/>
</dbReference>
<reference key="1">
    <citation type="journal article" date="2004" name="Genome Res.">
        <title>The status, quality, and expansion of the NIH full-length cDNA project: the Mammalian Gene Collection (MGC).</title>
        <authorList>
            <consortium name="The MGC Project Team"/>
        </authorList>
    </citation>
    <scope>NUCLEOTIDE SEQUENCE [LARGE SCALE MRNA]</scope>
    <source>
        <strain evidence="10">FVB/N</strain>
        <tissue evidence="10">Mammary gland</tissue>
    </source>
</reference>
<reference key="2">
    <citation type="journal article" date="2005" name="Science">
        <title>The transcriptional landscape of the mammalian genome.</title>
        <authorList>
            <person name="Carninci P."/>
            <person name="Kasukawa T."/>
            <person name="Katayama S."/>
            <person name="Gough J."/>
            <person name="Frith M.C."/>
            <person name="Maeda N."/>
            <person name="Oyama R."/>
            <person name="Ravasi T."/>
            <person name="Lenhard B."/>
            <person name="Wells C."/>
            <person name="Kodzius R."/>
            <person name="Shimokawa K."/>
            <person name="Bajic V.B."/>
            <person name="Brenner S.E."/>
            <person name="Batalov S."/>
            <person name="Forrest A.R."/>
            <person name="Zavolan M."/>
            <person name="Davis M.J."/>
            <person name="Wilming L.G."/>
            <person name="Aidinis V."/>
            <person name="Allen J.E."/>
            <person name="Ambesi-Impiombato A."/>
            <person name="Apweiler R."/>
            <person name="Aturaliya R.N."/>
            <person name="Bailey T.L."/>
            <person name="Bansal M."/>
            <person name="Baxter L."/>
            <person name="Beisel K.W."/>
            <person name="Bersano T."/>
            <person name="Bono H."/>
            <person name="Chalk A.M."/>
            <person name="Chiu K.P."/>
            <person name="Choudhary V."/>
            <person name="Christoffels A."/>
            <person name="Clutterbuck D.R."/>
            <person name="Crowe M.L."/>
            <person name="Dalla E."/>
            <person name="Dalrymple B.P."/>
            <person name="de Bono B."/>
            <person name="Della Gatta G."/>
            <person name="di Bernardo D."/>
            <person name="Down T."/>
            <person name="Engstrom P."/>
            <person name="Fagiolini M."/>
            <person name="Faulkner G."/>
            <person name="Fletcher C.F."/>
            <person name="Fukushima T."/>
            <person name="Furuno M."/>
            <person name="Futaki S."/>
            <person name="Gariboldi M."/>
            <person name="Georgii-Hemming P."/>
            <person name="Gingeras T.R."/>
            <person name="Gojobori T."/>
            <person name="Green R.E."/>
            <person name="Gustincich S."/>
            <person name="Harbers M."/>
            <person name="Hayashi Y."/>
            <person name="Hensch T.K."/>
            <person name="Hirokawa N."/>
            <person name="Hill D."/>
            <person name="Huminiecki L."/>
            <person name="Iacono M."/>
            <person name="Ikeo K."/>
            <person name="Iwama A."/>
            <person name="Ishikawa T."/>
            <person name="Jakt M."/>
            <person name="Kanapin A."/>
            <person name="Katoh M."/>
            <person name="Kawasawa Y."/>
            <person name="Kelso J."/>
            <person name="Kitamura H."/>
            <person name="Kitano H."/>
            <person name="Kollias G."/>
            <person name="Krishnan S.P."/>
            <person name="Kruger A."/>
            <person name="Kummerfeld S.K."/>
            <person name="Kurochkin I.V."/>
            <person name="Lareau L.F."/>
            <person name="Lazarevic D."/>
            <person name="Lipovich L."/>
            <person name="Liu J."/>
            <person name="Liuni S."/>
            <person name="McWilliam S."/>
            <person name="Madan Babu M."/>
            <person name="Madera M."/>
            <person name="Marchionni L."/>
            <person name="Matsuda H."/>
            <person name="Matsuzawa S."/>
            <person name="Miki H."/>
            <person name="Mignone F."/>
            <person name="Miyake S."/>
            <person name="Morris K."/>
            <person name="Mottagui-Tabar S."/>
            <person name="Mulder N."/>
            <person name="Nakano N."/>
            <person name="Nakauchi H."/>
            <person name="Ng P."/>
            <person name="Nilsson R."/>
            <person name="Nishiguchi S."/>
            <person name="Nishikawa S."/>
            <person name="Nori F."/>
            <person name="Ohara O."/>
            <person name="Okazaki Y."/>
            <person name="Orlando V."/>
            <person name="Pang K.C."/>
            <person name="Pavan W.J."/>
            <person name="Pavesi G."/>
            <person name="Pesole G."/>
            <person name="Petrovsky N."/>
            <person name="Piazza S."/>
            <person name="Reed J."/>
            <person name="Reid J.F."/>
            <person name="Ring B.Z."/>
            <person name="Ringwald M."/>
            <person name="Rost B."/>
            <person name="Ruan Y."/>
            <person name="Salzberg S.L."/>
            <person name="Sandelin A."/>
            <person name="Schneider C."/>
            <person name="Schoenbach C."/>
            <person name="Sekiguchi K."/>
            <person name="Semple C.A."/>
            <person name="Seno S."/>
            <person name="Sessa L."/>
            <person name="Sheng Y."/>
            <person name="Shibata Y."/>
            <person name="Shimada H."/>
            <person name="Shimada K."/>
            <person name="Silva D."/>
            <person name="Sinclair B."/>
            <person name="Sperling S."/>
            <person name="Stupka E."/>
            <person name="Sugiura K."/>
            <person name="Sultana R."/>
            <person name="Takenaka Y."/>
            <person name="Taki K."/>
            <person name="Tammoja K."/>
            <person name="Tan S.L."/>
            <person name="Tang S."/>
            <person name="Taylor M.S."/>
            <person name="Tegner J."/>
            <person name="Teichmann S.A."/>
            <person name="Ueda H.R."/>
            <person name="van Nimwegen E."/>
            <person name="Verardo R."/>
            <person name="Wei C.L."/>
            <person name="Yagi K."/>
            <person name="Yamanishi H."/>
            <person name="Zabarovsky E."/>
            <person name="Zhu S."/>
            <person name="Zimmer A."/>
            <person name="Hide W."/>
            <person name="Bult C."/>
            <person name="Grimmond S.M."/>
            <person name="Teasdale R.D."/>
            <person name="Liu E.T."/>
            <person name="Brusic V."/>
            <person name="Quackenbush J."/>
            <person name="Wahlestedt C."/>
            <person name="Mattick J.S."/>
            <person name="Hume D.A."/>
            <person name="Kai C."/>
            <person name="Sasaki D."/>
            <person name="Tomaru Y."/>
            <person name="Fukuda S."/>
            <person name="Kanamori-Katayama M."/>
            <person name="Suzuki M."/>
            <person name="Aoki J."/>
            <person name="Arakawa T."/>
            <person name="Iida J."/>
            <person name="Imamura K."/>
            <person name="Itoh M."/>
            <person name="Kato T."/>
            <person name="Kawaji H."/>
            <person name="Kawagashira N."/>
            <person name="Kawashima T."/>
            <person name="Kojima M."/>
            <person name="Kondo S."/>
            <person name="Konno H."/>
            <person name="Nakano K."/>
            <person name="Ninomiya N."/>
            <person name="Nishio T."/>
            <person name="Okada M."/>
            <person name="Plessy C."/>
            <person name="Shibata K."/>
            <person name="Shiraki T."/>
            <person name="Suzuki S."/>
            <person name="Tagami M."/>
            <person name="Waki K."/>
            <person name="Watahiki A."/>
            <person name="Okamura-Oho Y."/>
            <person name="Suzuki H."/>
            <person name="Kawai J."/>
            <person name="Hayashizaki Y."/>
        </authorList>
    </citation>
    <scope>NUCLEOTIDE SEQUENCE [LARGE SCALE MRNA] OF 49-586</scope>
    <source>
        <strain evidence="11">C57BL/6J</strain>
        <tissue evidence="11">Embryo</tissue>
    </source>
</reference>
<reference key="3">
    <citation type="journal article" date="2002" name="J. Biol. Chem.">
        <title>DYRK3 activation, engagement of protein kinase A/cAMP response element-binding protein, and modulation of progenitor cell survival.</title>
        <authorList>
            <person name="Li K."/>
            <person name="Zhao S."/>
            <person name="Karur V."/>
            <person name="Wojchowski D.M."/>
        </authorList>
    </citation>
    <scope>FUNCTION</scope>
    <scope>CATALYTIC ACTIVITY</scope>
    <scope>PHOSPHORYLATION AT TYR-368</scope>
    <scope>ACTIVITY REGULATION</scope>
    <scope>MUTAGENESIS OF LYS-237; TYR-366 AND TYR-368</scope>
</reference>
<reference key="4">
    <citation type="journal article" date="2006" name="Blood Cells Mol. Dis.">
        <title>Erythropoietin-dependent erythropoiesis: new insights and questions.</title>
        <authorList>
            <person name="Wojchowski D.M."/>
            <person name="Menon M.P."/>
            <person name="Sathyanarayana P."/>
            <person name="Fang J."/>
            <person name="Karur V."/>
            <person name="Houde E."/>
            <person name="Kapelle W."/>
            <person name="Bogachev O."/>
        </authorList>
    </citation>
    <scope>DISRUPTION PHENOTYPE</scope>
</reference>
<reference key="5">
    <citation type="journal article" date="2010" name="J. Biol. Chem.">
        <title>DYRK1A and DYRK3 promote cell survival through phosphorylation and activation of SIRT1.</title>
        <authorList>
            <person name="Guo X."/>
            <person name="Williams J.G."/>
            <person name="Schug T.T."/>
            <person name="Li X."/>
        </authorList>
    </citation>
    <scope>FUNCTION IN PHOSPHORYLATION OF SIRT1</scope>
    <scope>INTERACTION WITH SIRT1</scope>
    <scope>CATALYTIC ACTIVITY</scope>
</reference>
<gene>
    <name evidence="12" type="primary">Dyrk3</name>
</gene>
<name>DYRK3_MOUSE</name>
<comment type="function">
    <text evidence="1 6 8">Dual-specificity protein kinase that promotes disassembly of several types of membraneless organelles during mitosis, such as stress granules, nuclear speckles and pericentriolar material (By similarity). Dual-specificity tyrosine-regulated kinases (DYRKs) autophosphorylate a critical tyrosine residue in their activation loop and phosphorylate their substrate on serine and threonine residues (PubMed:12356771). Acts as a central dissolvase of membraneless organelles during the G2-to-M transition, after the nuclear-envelope breakdown: acts by mediating phosphorylation of multiple serine and threonine residues in unstructured domains of proteins, such as SRRM1 and PCM1 (By similarity). Does not mediate disassembly of all membraneless organelles: disassembly of P-body and nucleolus is not regulated by DYRK3 (By similarity). Dissolution of membraneless organelles at the onset of mitosis is also required to release mitotic regulators, such as ZNF207, from liquid-unmixed organelles where they are sequestered and keep them dissolved during mitosis (By similarity). Regulates mTORC1 by mediating the dissolution of stress granules: during stressful conditions, DYRK3 partitions from the cytosol to the stress granule, together with mTORC1 components, which prevents mTORC1 signaling (By similarity). When stress signals are gone, the kinase activity of DYRK3 is required for the dissolution of stress granule and mTORC1 relocation to the cytosol: acts by mediating the phosphorylation of the mTORC1 inhibitor AKT1S1, allowing full reactivation of mTORC1 signaling (By similarity). Also acts as a negative regulator of EPO-dependent erythropoiesis: may place an upper limit on red cell production during stress erythropoiesis (By similarity). Inhibits cell death due to cytokine withdrawal in hematopoietic progenitor cells (By similarity). Promotes cell survival upon genotoxic stress through phosphorylation of SIRT1: this in turn inhibits p53/TP53 activity and apoptosis (PubMed:20167603).</text>
</comment>
<comment type="catalytic activity">
    <reaction evidence="6 8">
        <text>L-seryl-[protein] + ATP = O-phospho-L-seryl-[protein] + ADP + H(+)</text>
        <dbReference type="Rhea" id="RHEA:17989"/>
        <dbReference type="Rhea" id="RHEA-COMP:9863"/>
        <dbReference type="Rhea" id="RHEA-COMP:11604"/>
        <dbReference type="ChEBI" id="CHEBI:15378"/>
        <dbReference type="ChEBI" id="CHEBI:29999"/>
        <dbReference type="ChEBI" id="CHEBI:30616"/>
        <dbReference type="ChEBI" id="CHEBI:83421"/>
        <dbReference type="ChEBI" id="CHEBI:456216"/>
        <dbReference type="EC" id="2.7.12.1"/>
    </reaction>
</comment>
<comment type="catalytic activity">
    <reaction evidence="6 8">
        <text>L-threonyl-[protein] + ATP = O-phospho-L-threonyl-[protein] + ADP + H(+)</text>
        <dbReference type="Rhea" id="RHEA:46608"/>
        <dbReference type="Rhea" id="RHEA-COMP:11060"/>
        <dbReference type="Rhea" id="RHEA-COMP:11605"/>
        <dbReference type="ChEBI" id="CHEBI:15378"/>
        <dbReference type="ChEBI" id="CHEBI:30013"/>
        <dbReference type="ChEBI" id="CHEBI:30616"/>
        <dbReference type="ChEBI" id="CHEBI:61977"/>
        <dbReference type="ChEBI" id="CHEBI:456216"/>
        <dbReference type="EC" id="2.7.12.1"/>
    </reaction>
</comment>
<comment type="catalytic activity">
    <reaction evidence="6 8">
        <text>L-tyrosyl-[protein] + ATP = O-phospho-L-tyrosyl-[protein] + ADP + H(+)</text>
        <dbReference type="Rhea" id="RHEA:10596"/>
        <dbReference type="Rhea" id="RHEA-COMP:10136"/>
        <dbReference type="Rhea" id="RHEA-COMP:20101"/>
        <dbReference type="ChEBI" id="CHEBI:15378"/>
        <dbReference type="ChEBI" id="CHEBI:30616"/>
        <dbReference type="ChEBI" id="CHEBI:46858"/>
        <dbReference type="ChEBI" id="CHEBI:61978"/>
        <dbReference type="ChEBI" id="CHEBI:456216"/>
        <dbReference type="EC" id="2.7.12.1"/>
    </reaction>
</comment>
<comment type="cofactor">
    <cofactor evidence="1">
        <name>Mg(2+)</name>
        <dbReference type="ChEBI" id="CHEBI:18420"/>
    </cofactor>
</comment>
<comment type="activity regulation">
    <text evidence="6">Protein kinase activity is activated following autophosphorylation at Tyr-368.</text>
</comment>
<comment type="subunit">
    <text evidence="8">Interacts with SIRT1.</text>
</comment>
<comment type="interaction">
    <interactant intactId="EBI-5242007">
        <id>Q922Y0</id>
    </interactant>
    <interactant intactId="EBI-1802585">
        <id>Q923E4</id>
        <label>Sirt1</label>
    </interactant>
    <organismsDiffer>false</organismsDiffer>
    <experiments>7</experiments>
</comment>
<comment type="subcellular location">
    <subcellularLocation>
        <location evidence="1">Nucleus</location>
    </subcellularLocation>
    <subcellularLocation>
        <location evidence="1">Cytoplasm</location>
    </subcellularLocation>
    <subcellularLocation>
        <location evidence="1">Nucleus speckle</location>
    </subcellularLocation>
    <subcellularLocation>
        <location evidence="1">Cytoplasmic granule</location>
    </subcellularLocation>
    <subcellularLocation>
        <location evidence="1">Cytoplasm</location>
        <location evidence="1">Cytoskeleton</location>
        <location evidence="1">Microtubule organizing center</location>
        <location evidence="1">Centrosome</location>
    </subcellularLocation>
    <text evidence="1">Associates with membraneless organelles in the cytoplasm and nucleus. Shuttles between cytoplasm and stress granules. Localized predominantly on distinct speckles distributed throughout the cytoplasm of the cell. At low concentration, showns a homogeneous distribution throughout the cytoplasm and does not condense in speckles. During oxidative and osmotic stress, localizes to stress granules.</text>
</comment>
<comment type="domain">
    <text evidence="1">The N-terminal domain, which is intrinsically disordered, is required for stress granule localization.</text>
</comment>
<comment type="PTM">
    <text evidence="1">Ubiquitinated at anaphase by the anaphase-promoting complex (APC/C), leading to its degradation by the proteasome.</text>
</comment>
<comment type="PTM">
    <text evidence="6">Protein kinase activity is activated following autophosphorylation at Tyr-368.</text>
</comment>
<comment type="disruption phenotype">
    <text evidence="7">Mice exhibit unperturbed steady-state erythropoiesis but significantly increased reticulocyte production during stress erythropoiesis and appear to be partially protected against anemia.</text>
</comment>
<comment type="similarity">
    <text evidence="9">Belongs to the protein kinase superfamily. CMGC Ser/Thr protein kinase family. MNB/DYRK subfamily.</text>
</comment>
<sequence>MGGAARDRGRKDAALPGAGLPPQQRRLGDGVYDTFMMIDETKGPPYSDTFSNPSEAPVSRRLNITTEPLTRGHTQHFVNGSEMKVEQLFQEFGNRRSNTLQSDGISNSEKSSPASQGKSSESLSAVKCNLSSRPSKVLPLTPEQALKQYKHHLTAYEKLEIVSYPEIYFVGPNAKKRQGVIGGPNNGGYDDADGAYIHVPRDHLAYRYEVLKIIGKGSFGQVARVYDHKLRQYVALKMVRNEKRFHRQAAEEIRILEHLKKQDKTGSMNVIHMLESFTFRNHVCMAFELLSIDLYELIKKNKFQGFSVQLVRKFAQSILQSLDALHKNKIIHCDLKPENILLKHHGRSATKVIDFGSSCFEYQKLYTYIQSRFYRAPEIILGCRYSTPIDIWSFGCILAELLTGQPLFPGEDEGDQLACMIELLGMPPQKLLEQSKRAKYFINSKGLPRYCSVSTQTDGRVVLLGGRSRRGKKRGPPGSKDWATALKGCGDYLFIEFLKRCLQWDPSARLTPAQALRHPWISKSTPKPLTMDKVPGKRVVNPTNAFQGLGSKLPPVVGIASKLKANLMSETSGSIPLCSVLPKLIS</sequence>